<organism>
    <name type="scientific">Beijerinckia indica subsp. indica (strain ATCC 9039 / DSM 1715 / NCIMB 8712)</name>
    <dbReference type="NCBI Taxonomy" id="395963"/>
    <lineage>
        <taxon>Bacteria</taxon>
        <taxon>Pseudomonadati</taxon>
        <taxon>Pseudomonadota</taxon>
        <taxon>Alphaproteobacteria</taxon>
        <taxon>Hyphomicrobiales</taxon>
        <taxon>Beijerinckiaceae</taxon>
        <taxon>Beijerinckia</taxon>
    </lineage>
</organism>
<dbReference type="EMBL" id="CP001016">
    <property type="protein sequence ID" value="ACB95259.1"/>
    <property type="molecule type" value="Genomic_DNA"/>
</dbReference>
<dbReference type="RefSeq" id="WP_012384616.1">
    <property type="nucleotide sequence ID" value="NC_010581.1"/>
</dbReference>
<dbReference type="KEGG" id="bid:Bind_1628"/>
<dbReference type="eggNOG" id="COG3811">
    <property type="taxonomic scope" value="Bacteria"/>
</dbReference>
<dbReference type="HOGENOM" id="CLU_164736_0_0_5"/>
<dbReference type="OrthoDB" id="7204880at2"/>
<dbReference type="Proteomes" id="UP000001695">
    <property type="component" value="Chromosome"/>
</dbReference>
<dbReference type="HAMAP" id="MF_00827">
    <property type="entry name" value="UPF0386"/>
    <property type="match status" value="1"/>
</dbReference>
<dbReference type="InterPro" id="IPR018654">
    <property type="entry name" value="YjhX_toxin"/>
</dbReference>
<dbReference type="NCBIfam" id="NF010240">
    <property type="entry name" value="PRK13687.1"/>
    <property type="match status" value="1"/>
</dbReference>
<dbReference type="Pfam" id="PF09857">
    <property type="entry name" value="YjhX_toxin"/>
    <property type="match status" value="1"/>
</dbReference>
<keyword id="KW-1185">Reference proteome</keyword>
<reference key="1">
    <citation type="journal article" date="2010" name="J. Bacteriol.">
        <title>Complete genome sequence of Beijerinckia indica subsp. indica.</title>
        <authorList>
            <person name="Tamas I."/>
            <person name="Dedysh S.N."/>
            <person name="Liesack W."/>
            <person name="Stott M.B."/>
            <person name="Alam M."/>
            <person name="Murrell J.C."/>
            <person name="Dunfield P.F."/>
        </authorList>
    </citation>
    <scope>NUCLEOTIDE SEQUENCE [LARGE SCALE GENOMIC DNA]</scope>
    <source>
        <strain>ATCC 9039 / DSM 1715 / NCIMB 8712</strain>
    </source>
</reference>
<protein>
    <recommendedName>
        <fullName evidence="1">UPF0386 protein Bind_1628</fullName>
    </recommendedName>
</protein>
<proteinExistence type="inferred from homology"/>
<accession>B2IC04</accession>
<name>Y1628_BEII9</name>
<gene>
    <name type="ordered locus">Bind_1628</name>
</gene>
<sequence length="85" mass="9833">MNISRSEQRVLHVLAQGGYVRHQRADNGRILDVLCFTRDGHVLADCTLEVFVKLRRKRLIESKASSPYRISDKGRRSVRAQLDNR</sequence>
<feature type="chain" id="PRO_0000352169" description="UPF0386 protein Bind_1628">
    <location>
        <begin position="1"/>
        <end position="85"/>
    </location>
</feature>
<comment type="similarity">
    <text evidence="1">Belongs to the UPF0386 family.</text>
</comment>
<evidence type="ECO:0000255" key="1">
    <source>
        <dbReference type="HAMAP-Rule" id="MF_00827"/>
    </source>
</evidence>